<gene>
    <name type="ORF">ORF2a</name>
</gene>
<accession>Q66136</accession>
<organism>
    <name type="scientific">Cucumber mosaic virus (strain B)</name>
    <name type="common">CMV</name>
    <dbReference type="NCBI Taxonomy" id="117119"/>
    <lineage>
        <taxon>Viruses</taxon>
        <taxon>Riboviria</taxon>
        <taxon>Orthornavirae</taxon>
        <taxon>Kitrinoviricota</taxon>
        <taxon>Alsuviricetes</taxon>
        <taxon>Martellivirales</taxon>
        <taxon>Bromoviridae</taxon>
        <taxon>Cucumovirus</taxon>
        <taxon>Cucumber mosaic virus</taxon>
    </lineage>
</organism>
<organismHost>
    <name type="scientific">Cucumis sativus</name>
    <name type="common">Cucumber</name>
    <dbReference type="NCBI Taxonomy" id="3659"/>
</organismHost>
<organismHost>
    <name type="scientific">Solanum lycopersicum</name>
    <name type="common">Tomato</name>
    <name type="synonym">Lycopersicon esculentum</name>
    <dbReference type="NCBI Taxonomy" id="4081"/>
</organismHost>
<organismHost>
    <name type="scientific">Spinacia oleracea</name>
    <name type="common">Spinach</name>
    <dbReference type="NCBI Taxonomy" id="3562"/>
</organismHost>
<name>RDRP_CMVB</name>
<reference key="1">
    <citation type="submission" date="1996-06" db="EMBL/GenBank/DDBJ databases">
        <authorList>
            <person name="Jang H."/>
            <person name="Choi Y."/>
            <person name="Kim C."/>
        </authorList>
    </citation>
    <scope>NUCLEOTIDE SEQUENCE [MRNA]</scope>
</reference>
<keyword id="KW-0547">Nucleotide-binding</keyword>
<keyword id="KW-0548">Nucleotidyltransferase</keyword>
<keyword id="KW-0696">RNA-directed RNA polymerase</keyword>
<keyword id="KW-0808">Transferase</keyword>
<keyword id="KW-0693">Viral RNA replication</keyword>
<evidence type="ECO:0000250" key="1"/>
<evidence type="ECO:0000255" key="2">
    <source>
        <dbReference type="PROSITE-ProRule" id="PRU00539"/>
    </source>
</evidence>
<evidence type="ECO:0000256" key="3">
    <source>
        <dbReference type="SAM" id="MobiDB-lite"/>
    </source>
</evidence>
<evidence type="ECO:0000305" key="4"/>
<protein>
    <recommendedName>
        <fullName>RNA-directed RNA polymerase 2a</fullName>
        <shortName>protein 2a</shortName>
        <ecNumber>2.7.7.48</ecNumber>
    </recommendedName>
</protein>
<proteinExistence type="evidence at transcript level"/>
<sequence>MAFPAPAFSLANLLNGSYGVDTPEDMERLRSEQREEAAAACRNYRPLPAVDVSESVTEDAHSLQTPDGAPAEAVSDEFVTYGAEDYLEKSDDELLVAFETMVKPMRIGQLWCPAFNKCSFISSIAMARALLLAPRTSHRTMKCFEDLVAAIYTKSDFYYSEECEADDVQMDISSRDVPGYSFEPWSRTSGFEPPPICEACDMIMYQCPCFDFNALKKPCAERTFADDYVIEGLDGVVDNATLLSNLGPFLVPVKCQYEKCPTPTIAIPPNLNRATDRVDINLVQSICDSTLPTHSNYDDSFHQVFVESADYSIDLDHVRLRQSDLIAKIPDSGHMIPVLNTGSGHKRVGTTKEVLTAIKKRNADVPELGDSVNLSRLSKAVAERFFISYINGNSLASSNFVNVVSNFHDYMEKWKSSGLSYDDLPDLHAENLQFYDHMIKSDVKPVVSDTLNIDRPVPATITYHKKSITSQFSPLFTALFERFQRCLRERIILPVGKISSLEMAGFDVKNKYCLEIDLSKFDKSQGEFHLLIQEHILNGLGCPAPITKWWCDFHRFSYIRDRRAGVGMPISFQRRTGDAFTYFGNTIVTMAEFAWCYDTDQFEKLLFSGDDSLGFSQLPPVGDSSKFTTLYNMEAKVMEPSVPYICSKFLLSDEFGNTFSVPDPLREVQRLGTKKIPYSDNDEFLFAHFMQFVDRLKFLDRMSQSCIDQLSIFFELKYKKSGEEAALMLGAFKKYTANFQSYKELYYSDRRQCELINSFCISEFRVERVNSNKQRKKHGIERRCNDKRRTPTGSYGGGEEAETKVSQTESTGTRSQKSQRESAFKSQTVPLPTVLSSGRSGTDRVIPPCERGEGTRA</sequence>
<dbReference type="EC" id="2.7.7.48"/>
<dbReference type="EMBL" id="U59740">
    <property type="protein sequence ID" value="AAB03187.1"/>
    <property type="molecule type" value="mRNA"/>
</dbReference>
<dbReference type="GO" id="GO:0000166">
    <property type="term" value="F:nucleotide binding"/>
    <property type="evidence" value="ECO:0007669"/>
    <property type="project" value="UniProtKB-KW"/>
</dbReference>
<dbReference type="GO" id="GO:0003723">
    <property type="term" value="F:RNA binding"/>
    <property type="evidence" value="ECO:0007669"/>
    <property type="project" value="InterPro"/>
</dbReference>
<dbReference type="GO" id="GO:0003968">
    <property type="term" value="F:RNA-directed RNA polymerase activity"/>
    <property type="evidence" value="ECO:0007669"/>
    <property type="project" value="UniProtKB-KW"/>
</dbReference>
<dbReference type="GO" id="GO:0006351">
    <property type="term" value="P:DNA-templated transcription"/>
    <property type="evidence" value="ECO:0007669"/>
    <property type="project" value="InterPro"/>
</dbReference>
<dbReference type="GO" id="GO:0039690">
    <property type="term" value="P:positive stranded viral RNA replication"/>
    <property type="evidence" value="ECO:0007669"/>
    <property type="project" value="InterPro"/>
</dbReference>
<dbReference type="CDD" id="cd23252">
    <property type="entry name" value="Bromoviridae_RdRp"/>
    <property type="match status" value="1"/>
</dbReference>
<dbReference type="InterPro" id="IPR047309">
    <property type="entry name" value="Bromoviridae_RdRp"/>
</dbReference>
<dbReference type="InterPro" id="IPR043502">
    <property type="entry name" value="DNA/RNA_pol_sf"/>
</dbReference>
<dbReference type="InterPro" id="IPR001788">
    <property type="entry name" value="RNA-dep_RNA_pol_alsuvir"/>
</dbReference>
<dbReference type="InterPro" id="IPR007094">
    <property type="entry name" value="RNA-dir_pol_PSvirus"/>
</dbReference>
<dbReference type="Pfam" id="PF00978">
    <property type="entry name" value="RdRP_2"/>
    <property type="match status" value="1"/>
</dbReference>
<dbReference type="SUPFAM" id="SSF56672">
    <property type="entry name" value="DNA/RNA polymerases"/>
    <property type="match status" value="1"/>
</dbReference>
<dbReference type="PROSITE" id="PS50507">
    <property type="entry name" value="RDRP_SSRNA_POS"/>
    <property type="match status" value="1"/>
</dbReference>
<feature type="chain" id="PRO_0000083272" description="RNA-directed RNA polymerase 2a">
    <location>
        <begin position="1"/>
        <end position="857"/>
    </location>
</feature>
<feature type="domain" description="RdRp catalytic" evidence="2">
    <location>
        <begin position="511"/>
        <end position="624"/>
    </location>
</feature>
<feature type="region of interest" description="Disordered" evidence="3">
    <location>
        <begin position="775"/>
        <end position="857"/>
    </location>
</feature>
<feature type="compositionally biased region" description="Polar residues" evidence="3">
    <location>
        <begin position="804"/>
        <end position="816"/>
    </location>
</feature>
<feature type="compositionally biased region" description="Polar residues" evidence="3">
    <location>
        <begin position="824"/>
        <end position="840"/>
    </location>
</feature>
<comment type="function">
    <text evidence="4">RNA-dependent RNA polymerase which replicates the viral genome composed of 3 RNA segments, RNA1, RNA2 and RNA3.</text>
</comment>
<comment type="catalytic activity">
    <reaction evidence="2">
        <text>RNA(n) + a ribonucleoside 5'-triphosphate = RNA(n+1) + diphosphate</text>
        <dbReference type="Rhea" id="RHEA:21248"/>
        <dbReference type="Rhea" id="RHEA-COMP:14527"/>
        <dbReference type="Rhea" id="RHEA-COMP:17342"/>
        <dbReference type="ChEBI" id="CHEBI:33019"/>
        <dbReference type="ChEBI" id="CHEBI:61557"/>
        <dbReference type="ChEBI" id="CHEBI:140395"/>
        <dbReference type="EC" id="2.7.7.48"/>
    </reaction>
</comment>
<comment type="subunit">
    <text evidence="1">Interacts with replication protein 1a.</text>
</comment>
<comment type="similarity">
    <text evidence="4">Belongs to the ssRNA positive-strand viruses RNA-directed RNA polymerase family.</text>
</comment>